<reference key="1">
    <citation type="journal article" date="2008" name="PLoS Genet.">
        <title>Genomic islands in the pathogenic filamentous fungus Aspergillus fumigatus.</title>
        <authorList>
            <person name="Fedorova N.D."/>
            <person name="Khaldi N."/>
            <person name="Joardar V.S."/>
            <person name="Maiti R."/>
            <person name="Amedeo P."/>
            <person name="Anderson M.J."/>
            <person name="Crabtree J."/>
            <person name="Silva J.C."/>
            <person name="Badger J.H."/>
            <person name="Albarraq A."/>
            <person name="Angiuoli S."/>
            <person name="Bussey H."/>
            <person name="Bowyer P."/>
            <person name="Cotty P.J."/>
            <person name="Dyer P.S."/>
            <person name="Egan A."/>
            <person name="Galens K."/>
            <person name="Fraser-Liggett C.M."/>
            <person name="Haas B.J."/>
            <person name="Inman J.M."/>
            <person name="Kent R."/>
            <person name="Lemieux S."/>
            <person name="Malavazi I."/>
            <person name="Orvis J."/>
            <person name="Roemer T."/>
            <person name="Ronning C.M."/>
            <person name="Sundaram J.P."/>
            <person name="Sutton G."/>
            <person name="Turner G."/>
            <person name="Venter J.C."/>
            <person name="White O.R."/>
            <person name="Whitty B.R."/>
            <person name="Youngman P."/>
            <person name="Wolfe K.H."/>
            <person name="Goldman G.H."/>
            <person name="Wortman J.R."/>
            <person name="Jiang B."/>
            <person name="Denning D.W."/>
            <person name="Nierman W.C."/>
        </authorList>
    </citation>
    <scope>NUCLEOTIDE SEQUENCE [LARGE SCALE GENOMIC DNA]</scope>
    <source>
        <strain>ATCC 1020 / DSM 3700 / CBS 544.65 / FGSC A1164 / JCM 1740 / NRRL 181 / WB 181</strain>
    </source>
</reference>
<feature type="chain" id="PRO_0000365447" description="Eukaryotic translation initiation factor 3 subunit G">
    <location>
        <begin position="1"/>
        <end position="290"/>
    </location>
</feature>
<feature type="domain" description="RRM" evidence="1">
    <location>
        <begin position="210"/>
        <end position="288"/>
    </location>
</feature>
<feature type="region of interest" description="Disordered" evidence="2">
    <location>
        <begin position="1"/>
        <end position="34"/>
    </location>
</feature>
<keyword id="KW-0963">Cytoplasm</keyword>
<keyword id="KW-0396">Initiation factor</keyword>
<keyword id="KW-0648">Protein biosynthesis</keyword>
<keyword id="KW-1185">Reference proteome</keyword>
<keyword id="KW-0694">RNA-binding</keyword>
<name>EIF3G_NEOFI</name>
<gene>
    <name evidence="1" type="primary">TIF35</name>
    <name type="ORF">NFIA_085320</name>
</gene>
<comment type="function">
    <text evidence="1">RNA-binding component of the eukaryotic translation initiation factor 3 (eIF-3) complex, which is involved in protein synthesis of a specialized repertoire of mRNAs and, together with other initiation factors, stimulates binding of mRNA and methionyl-tRNAi to the 40S ribosome. The eIF-3 complex specifically targets and initiates translation of a subset of mRNAs involved in cell proliferation. This subunit can bind 18S rRNA.</text>
</comment>
<comment type="subunit">
    <text evidence="1">Component of the eukaryotic translation initiation factor 3 (eIF-3) complex.</text>
</comment>
<comment type="subcellular location">
    <subcellularLocation>
        <location evidence="1">Cytoplasm</location>
    </subcellularLocation>
</comment>
<comment type="similarity">
    <text evidence="1">Belongs to the eIF-3 subunit G family.</text>
</comment>
<accession>A1DGS2</accession>
<organism>
    <name type="scientific">Neosartorya fischeri (strain ATCC 1020 / DSM 3700 / CBS 544.65 / FGSC A1164 / JCM 1740 / NRRL 181 / WB 181)</name>
    <name type="common">Aspergillus fischerianus</name>
    <dbReference type="NCBI Taxonomy" id="331117"/>
    <lineage>
        <taxon>Eukaryota</taxon>
        <taxon>Fungi</taxon>
        <taxon>Dikarya</taxon>
        <taxon>Ascomycota</taxon>
        <taxon>Pezizomycotina</taxon>
        <taxon>Eurotiomycetes</taxon>
        <taxon>Eurotiomycetidae</taxon>
        <taxon>Eurotiales</taxon>
        <taxon>Aspergillaceae</taxon>
        <taxon>Aspergillus</taxon>
        <taxon>Aspergillus subgen. Fumigati</taxon>
    </lineage>
</organism>
<proteinExistence type="inferred from homology"/>
<protein>
    <recommendedName>
        <fullName evidence="1">Eukaryotic translation initiation factor 3 subunit G</fullName>
        <shortName evidence="1">eIF3g</shortName>
    </recommendedName>
    <alternativeName>
        <fullName evidence="1">Eukaryotic translation initiation factor 3 RNA-binding subunit</fullName>
        <shortName evidence="1">eIF-3 RNA-binding subunit</shortName>
    </alternativeName>
    <alternativeName>
        <fullName evidence="1">Translation initiation factor eIF3 p33 subunit homolog</fullName>
        <shortName evidence="1">eIF3 p33 homolog</shortName>
    </alternativeName>
</protein>
<sequence length="290" mass="31871">MSRLGNRAADWADDEEFDDPSALPAQQVTTNKDGTKTVVSYRFNDEGKKVKVTRRIKTTVVREHVNPQVAERRSWAKFGLEKGHAAGPSFDTTSVGENIIFRPSVNWRAQAAEAEKAGPEKGSIKDQLKDKKVKCRICSGEHFTARCPFKDTMAPVDETAAAGAEPGAEDVPAAGGLGAGTSSYVPPHLRKGAAAGGERMAGKYEKDDLATLRVTNVSELAEESELRDLFERFGRVTRVFLARDRETQRAKGFAFISFADRTDAARACEKMDGFGYRHLILRVEFAKRAT</sequence>
<evidence type="ECO:0000255" key="1">
    <source>
        <dbReference type="HAMAP-Rule" id="MF_03006"/>
    </source>
</evidence>
<evidence type="ECO:0000256" key="2">
    <source>
        <dbReference type="SAM" id="MobiDB-lite"/>
    </source>
</evidence>
<dbReference type="EMBL" id="DS027696">
    <property type="protein sequence ID" value="EAW18579.1"/>
    <property type="molecule type" value="Genomic_DNA"/>
</dbReference>
<dbReference type="RefSeq" id="XP_001260476.1">
    <property type="nucleotide sequence ID" value="XM_001260475.1"/>
</dbReference>
<dbReference type="SMR" id="A1DGS2"/>
<dbReference type="STRING" id="331117.A1DGS2"/>
<dbReference type="EnsemblFungi" id="EAW18579">
    <property type="protein sequence ID" value="EAW18579"/>
    <property type="gene ID" value="NFIA_085320"/>
</dbReference>
<dbReference type="GeneID" id="4587034"/>
<dbReference type="KEGG" id="nfi:NFIA_085320"/>
<dbReference type="VEuPathDB" id="FungiDB:NFIA_085320"/>
<dbReference type="eggNOG" id="KOG0122">
    <property type="taxonomic scope" value="Eukaryota"/>
</dbReference>
<dbReference type="HOGENOM" id="CLU_034595_0_0_1"/>
<dbReference type="OMA" id="ICQGDHF"/>
<dbReference type="OrthoDB" id="639027at2759"/>
<dbReference type="Proteomes" id="UP000006702">
    <property type="component" value="Unassembled WGS sequence"/>
</dbReference>
<dbReference type="GO" id="GO:0016282">
    <property type="term" value="C:eukaryotic 43S preinitiation complex"/>
    <property type="evidence" value="ECO:0007669"/>
    <property type="project" value="UniProtKB-UniRule"/>
</dbReference>
<dbReference type="GO" id="GO:0033290">
    <property type="term" value="C:eukaryotic 48S preinitiation complex"/>
    <property type="evidence" value="ECO:0007669"/>
    <property type="project" value="UniProtKB-UniRule"/>
</dbReference>
<dbReference type="GO" id="GO:0071540">
    <property type="term" value="C:eukaryotic translation initiation factor 3 complex, eIF3e"/>
    <property type="evidence" value="ECO:0007669"/>
    <property type="project" value="EnsemblFungi"/>
</dbReference>
<dbReference type="GO" id="GO:0071541">
    <property type="term" value="C:eukaryotic translation initiation factor 3 complex, eIF3m"/>
    <property type="evidence" value="ECO:0007669"/>
    <property type="project" value="EnsemblFungi"/>
</dbReference>
<dbReference type="GO" id="GO:0043614">
    <property type="term" value="C:multi-eIF complex"/>
    <property type="evidence" value="ECO:0007669"/>
    <property type="project" value="EnsemblFungi"/>
</dbReference>
<dbReference type="GO" id="GO:0003723">
    <property type="term" value="F:RNA binding"/>
    <property type="evidence" value="ECO:0007669"/>
    <property type="project" value="UniProtKB-UniRule"/>
</dbReference>
<dbReference type="GO" id="GO:0003743">
    <property type="term" value="F:translation initiation factor activity"/>
    <property type="evidence" value="ECO:0007669"/>
    <property type="project" value="UniProtKB-UniRule"/>
</dbReference>
<dbReference type="GO" id="GO:0001732">
    <property type="term" value="P:formation of cytoplasmic translation initiation complex"/>
    <property type="evidence" value="ECO:0007669"/>
    <property type="project" value="UniProtKB-UniRule"/>
</dbReference>
<dbReference type="GO" id="GO:0002188">
    <property type="term" value="P:translation reinitiation"/>
    <property type="evidence" value="ECO:0007669"/>
    <property type="project" value="EnsemblFungi"/>
</dbReference>
<dbReference type="GO" id="GO:0006415">
    <property type="term" value="P:translational termination"/>
    <property type="evidence" value="ECO:0007669"/>
    <property type="project" value="EnsemblFungi"/>
</dbReference>
<dbReference type="CDD" id="cd12933">
    <property type="entry name" value="eIF3G"/>
    <property type="match status" value="1"/>
</dbReference>
<dbReference type="CDD" id="cd12408">
    <property type="entry name" value="RRM_eIF3G_like"/>
    <property type="match status" value="1"/>
</dbReference>
<dbReference type="FunFam" id="3.30.70.330:FF:000328">
    <property type="entry name" value="Eukaryotic translation initiation factor 3 subunit G"/>
    <property type="match status" value="1"/>
</dbReference>
<dbReference type="Gene3D" id="3.30.70.330">
    <property type="match status" value="1"/>
</dbReference>
<dbReference type="HAMAP" id="MF_03006">
    <property type="entry name" value="eIF3g"/>
    <property type="match status" value="1"/>
</dbReference>
<dbReference type="InterPro" id="IPR017334">
    <property type="entry name" value="eIF3_g"/>
</dbReference>
<dbReference type="InterPro" id="IPR024675">
    <property type="entry name" value="eIF3g_N"/>
</dbReference>
<dbReference type="InterPro" id="IPR034240">
    <property type="entry name" value="eIF3G_RRM"/>
</dbReference>
<dbReference type="InterPro" id="IPR012677">
    <property type="entry name" value="Nucleotide-bd_a/b_plait_sf"/>
</dbReference>
<dbReference type="InterPro" id="IPR035979">
    <property type="entry name" value="RBD_domain_sf"/>
</dbReference>
<dbReference type="InterPro" id="IPR000504">
    <property type="entry name" value="RRM_dom"/>
</dbReference>
<dbReference type="PANTHER" id="PTHR10352">
    <property type="entry name" value="EUKARYOTIC TRANSLATION INITIATION FACTOR 3 SUBUNIT G"/>
    <property type="match status" value="1"/>
</dbReference>
<dbReference type="Pfam" id="PF12353">
    <property type="entry name" value="eIF3g"/>
    <property type="match status" value="1"/>
</dbReference>
<dbReference type="Pfam" id="PF00076">
    <property type="entry name" value="RRM_1"/>
    <property type="match status" value="1"/>
</dbReference>
<dbReference type="PIRSF" id="PIRSF037949">
    <property type="entry name" value="Transl_init_eIF-3_RNA-bind"/>
    <property type="match status" value="1"/>
</dbReference>
<dbReference type="SMART" id="SM00360">
    <property type="entry name" value="RRM"/>
    <property type="match status" value="1"/>
</dbReference>
<dbReference type="SUPFAM" id="SSF54928">
    <property type="entry name" value="RNA-binding domain, RBD"/>
    <property type="match status" value="1"/>
</dbReference>
<dbReference type="PROSITE" id="PS50102">
    <property type="entry name" value="RRM"/>
    <property type="match status" value="1"/>
</dbReference>